<feature type="chain" id="PRO_0000286845" description="Ribonuclease J 1">
    <location>
        <begin position="1"/>
        <end position="565"/>
    </location>
</feature>
<feature type="binding site" evidence="2">
    <location>
        <position position="74"/>
    </location>
    <ligand>
        <name>Zn(2+)</name>
        <dbReference type="ChEBI" id="CHEBI:29105"/>
        <label>1</label>
        <note>catalytic</note>
    </ligand>
</feature>
<feature type="binding site" evidence="2">
    <location>
        <position position="76"/>
    </location>
    <ligand>
        <name>Zn(2+)</name>
        <dbReference type="ChEBI" id="CHEBI:29105"/>
        <label>1</label>
        <note>catalytic</note>
    </ligand>
</feature>
<feature type="binding site" evidence="2">
    <location>
        <position position="78"/>
    </location>
    <ligand>
        <name>Zn(2+)</name>
        <dbReference type="ChEBI" id="CHEBI:29105"/>
        <label>2</label>
        <note>catalytic</note>
    </ligand>
</feature>
<feature type="binding site" evidence="2">
    <location>
        <position position="79"/>
    </location>
    <ligand>
        <name>Zn(2+)</name>
        <dbReference type="ChEBI" id="CHEBI:29105"/>
        <label>2</label>
        <note>catalytic</note>
    </ligand>
</feature>
<feature type="binding site" evidence="2">
    <location>
        <position position="142"/>
    </location>
    <ligand>
        <name>Zn(2+)</name>
        <dbReference type="ChEBI" id="CHEBI:29105"/>
        <label>1</label>
        <note>catalytic</note>
    </ligand>
</feature>
<feature type="binding site" evidence="2">
    <location>
        <position position="164"/>
    </location>
    <ligand>
        <name>Zn(2+)</name>
        <dbReference type="ChEBI" id="CHEBI:29105"/>
        <label>1</label>
        <note>catalytic</note>
    </ligand>
</feature>
<feature type="binding site" evidence="2">
    <location>
        <position position="164"/>
    </location>
    <ligand>
        <name>Zn(2+)</name>
        <dbReference type="ChEBI" id="CHEBI:29105"/>
        <label>2</label>
        <note>catalytic</note>
    </ligand>
</feature>
<feature type="binding site" evidence="2">
    <location>
        <begin position="364"/>
        <end position="368"/>
    </location>
    <ligand>
        <name>substrate</name>
    </ligand>
</feature>
<feature type="binding site" evidence="2">
    <location>
        <position position="390"/>
    </location>
    <ligand>
        <name>Zn(2+)</name>
        <dbReference type="ChEBI" id="CHEBI:29105"/>
        <label>2</label>
        <note>catalytic</note>
    </ligand>
</feature>
<proteinExistence type="evidence at protein level"/>
<protein>
    <recommendedName>
        <fullName evidence="2">Ribonuclease J 1</fullName>
        <shortName evidence="2">RNase J1</shortName>
        <ecNumber evidence="2">3.1.-.-</ecNumber>
    </recommendedName>
</protein>
<organism>
    <name type="scientific">Staphylococcus aureus (strain N315)</name>
    <dbReference type="NCBI Taxonomy" id="158879"/>
    <lineage>
        <taxon>Bacteria</taxon>
        <taxon>Bacillati</taxon>
        <taxon>Bacillota</taxon>
        <taxon>Bacilli</taxon>
        <taxon>Bacillales</taxon>
        <taxon>Staphylococcaceae</taxon>
        <taxon>Staphylococcus</taxon>
    </lineage>
</organism>
<gene>
    <name evidence="2" type="primary">rnj1</name>
    <name type="ordered locus">SA0940</name>
</gene>
<comment type="function">
    <text evidence="1">An RNase that has 5'-3' exonuclease and possibly endoonuclease activity. Involved in maturation of rRNA and in some organisms also mRNA maturation and/or decay (By similarity).</text>
</comment>
<comment type="cofactor">
    <cofactor evidence="2">
        <name>Zn(2+)</name>
        <dbReference type="ChEBI" id="CHEBI:29105"/>
    </cofactor>
    <text evidence="2">Binds up to 2 Zn(2+) ions per subunit. It is not clear if Zn(2+) or Mg(2+) is physiologically important.</text>
</comment>
<comment type="subunit">
    <text evidence="2">Homodimer, may be a subunit of the RNA degradosome.</text>
</comment>
<comment type="subcellular location">
    <subcellularLocation>
        <location evidence="2">Cytoplasm</location>
    </subcellularLocation>
</comment>
<comment type="similarity">
    <text evidence="2">Belongs to the metallo-beta-lactamase superfamily. RNA-metabolizing metallo-beta-lactamase-like family. Bacterial RNase J subfamily.</text>
</comment>
<sequence>MKQLHPNEVGVYALGGLGEIGKNTYAVEYKDEIVIIDAGIKFPDDNLLGIDYVIPDYTYLVQNQDKIVGLFITHGHEDHIGGVPFLLKQLNIPIYGGPLALGLIRNKLEEHHLLRTAKLNEINEDSVIKSKHFTISFYLTTHSIPETYGVIVDTPEGKVVHTGDFKFDFTPVGKPANIAKMAQLGEEGVLCLLSDSTNSLVPDFTLSEREVGQNVDKIFRNCKGRIIFATFASNIYRVQQAVEAAIKNNRKIVTFGRSMENNIKIGMELGYIKAPPETFIEPNKINTVPKHELLILCTGSQGEPMAALSRIANGTHKQIKIIPEDTVVFSSSPIPGNTKSINRTINSLYKAGADVIHSKISNIHTSGHGSQGDQQLMLRLIKPKYFLPIHGEYRMLKAHGETGVECGVEEDNVFIFDIGDVLALTHDSARKAGRIPSGNVLVDGSGIGDIGNVVIRDRKLLSEEGLVIVVVSIDFNTNKLLSGPDIISRGFVYMRESGQLIYDAQRKIKTDVISKLNQNKDIQWHQIKSSIIETLQPYLFEKTARKPMILPVIMKVNEQKESNNK</sequence>
<name>RNJ1_STAAN</name>
<evidence type="ECO:0000250" key="1"/>
<evidence type="ECO:0000255" key="2">
    <source>
        <dbReference type="HAMAP-Rule" id="MF_01491"/>
    </source>
</evidence>
<dbReference type="EC" id="3.1.-.-" evidence="2"/>
<dbReference type="EMBL" id="BA000018">
    <property type="protein sequence ID" value="BAB42186.1"/>
    <property type="molecule type" value="Genomic_DNA"/>
</dbReference>
<dbReference type="PIR" id="G89878">
    <property type="entry name" value="G89878"/>
</dbReference>
<dbReference type="SMR" id="Q7A682"/>
<dbReference type="EnsemblBacteria" id="BAB42186">
    <property type="protein sequence ID" value="BAB42186"/>
    <property type="gene ID" value="BAB42186"/>
</dbReference>
<dbReference type="KEGG" id="sau:SA0940"/>
<dbReference type="HOGENOM" id="CLU_008727_3_1_9"/>
<dbReference type="GO" id="GO:0005737">
    <property type="term" value="C:cytoplasm"/>
    <property type="evidence" value="ECO:0007669"/>
    <property type="project" value="UniProtKB-SubCell"/>
</dbReference>
<dbReference type="GO" id="GO:0004534">
    <property type="term" value="F:5'-3' RNA exonuclease activity"/>
    <property type="evidence" value="ECO:0007669"/>
    <property type="project" value="UniProtKB-UniRule"/>
</dbReference>
<dbReference type="GO" id="GO:0003723">
    <property type="term" value="F:RNA binding"/>
    <property type="evidence" value="ECO:0007669"/>
    <property type="project" value="UniProtKB-UniRule"/>
</dbReference>
<dbReference type="GO" id="GO:0004521">
    <property type="term" value="F:RNA endonuclease activity"/>
    <property type="evidence" value="ECO:0007669"/>
    <property type="project" value="UniProtKB-UniRule"/>
</dbReference>
<dbReference type="GO" id="GO:0008270">
    <property type="term" value="F:zinc ion binding"/>
    <property type="evidence" value="ECO:0007669"/>
    <property type="project" value="InterPro"/>
</dbReference>
<dbReference type="GO" id="GO:0006364">
    <property type="term" value="P:rRNA processing"/>
    <property type="evidence" value="ECO:0007669"/>
    <property type="project" value="UniProtKB-UniRule"/>
</dbReference>
<dbReference type="CDD" id="cd07714">
    <property type="entry name" value="RNaseJ_MBL-fold"/>
    <property type="match status" value="1"/>
</dbReference>
<dbReference type="FunFam" id="3.10.20.580:FF:000001">
    <property type="entry name" value="Ribonuclease J"/>
    <property type="match status" value="1"/>
</dbReference>
<dbReference type="Gene3D" id="3.10.20.580">
    <property type="match status" value="1"/>
</dbReference>
<dbReference type="Gene3D" id="3.40.50.10710">
    <property type="entry name" value="Metallo-hydrolase/oxidoreductase"/>
    <property type="match status" value="1"/>
</dbReference>
<dbReference type="Gene3D" id="3.60.15.10">
    <property type="entry name" value="Ribonuclease Z/Hydroxyacylglutathione hydrolase-like"/>
    <property type="match status" value="1"/>
</dbReference>
<dbReference type="HAMAP" id="MF_01491">
    <property type="entry name" value="RNase_J_bact"/>
    <property type="match status" value="1"/>
</dbReference>
<dbReference type="InterPro" id="IPR001279">
    <property type="entry name" value="Metallo-B-lactamas"/>
</dbReference>
<dbReference type="InterPro" id="IPR036866">
    <property type="entry name" value="RibonucZ/Hydroxyglut_hydro"/>
</dbReference>
<dbReference type="InterPro" id="IPR011108">
    <property type="entry name" value="RMMBL"/>
</dbReference>
<dbReference type="InterPro" id="IPR004613">
    <property type="entry name" value="RNase_J"/>
</dbReference>
<dbReference type="InterPro" id="IPR042173">
    <property type="entry name" value="RNase_J_2"/>
</dbReference>
<dbReference type="InterPro" id="IPR055132">
    <property type="entry name" value="RNase_J_b_CASP"/>
</dbReference>
<dbReference type="InterPro" id="IPR030854">
    <property type="entry name" value="RNase_J_bac"/>
</dbReference>
<dbReference type="InterPro" id="IPR041636">
    <property type="entry name" value="RNase_J_C"/>
</dbReference>
<dbReference type="InterPro" id="IPR001587">
    <property type="entry name" value="RNase_J_CS"/>
</dbReference>
<dbReference type="NCBIfam" id="TIGR00649">
    <property type="entry name" value="MG423"/>
    <property type="match status" value="1"/>
</dbReference>
<dbReference type="NCBIfam" id="NF047419">
    <property type="entry name" value="RNase_J1_RnjA"/>
    <property type="match status" value="1"/>
</dbReference>
<dbReference type="PANTHER" id="PTHR43694">
    <property type="entry name" value="RIBONUCLEASE J"/>
    <property type="match status" value="1"/>
</dbReference>
<dbReference type="PANTHER" id="PTHR43694:SF1">
    <property type="entry name" value="RIBONUCLEASE J"/>
    <property type="match status" value="1"/>
</dbReference>
<dbReference type="Pfam" id="PF00753">
    <property type="entry name" value="Lactamase_B"/>
    <property type="match status" value="1"/>
</dbReference>
<dbReference type="Pfam" id="PF07521">
    <property type="entry name" value="RMMBL"/>
    <property type="match status" value="1"/>
</dbReference>
<dbReference type="Pfam" id="PF22505">
    <property type="entry name" value="RNase_J_b_CASP"/>
    <property type="match status" value="1"/>
</dbReference>
<dbReference type="Pfam" id="PF17770">
    <property type="entry name" value="RNase_J_C"/>
    <property type="match status" value="1"/>
</dbReference>
<dbReference type="PIRSF" id="PIRSF004803">
    <property type="entry name" value="RnjA"/>
    <property type="match status" value="1"/>
</dbReference>
<dbReference type="SMART" id="SM00849">
    <property type="entry name" value="Lactamase_B"/>
    <property type="match status" value="1"/>
</dbReference>
<dbReference type="SUPFAM" id="SSF56281">
    <property type="entry name" value="Metallo-hydrolase/oxidoreductase"/>
    <property type="match status" value="1"/>
</dbReference>
<dbReference type="PROSITE" id="PS01292">
    <property type="entry name" value="UPF0036"/>
    <property type="match status" value="1"/>
</dbReference>
<reference key="1">
    <citation type="journal article" date="2001" name="Lancet">
        <title>Whole genome sequencing of meticillin-resistant Staphylococcus aureus.</title>
        <authorList>
            <person name="Kuroda M."/>
            <person name="Ohta T."/>
            <person name="Uchiyama I."/>
            <person name="Baba T."/>
            <person name="Yuzawa H."/>
            <person name="Kobayashi I."/>
            <person name="Cui L."/>
            <person name="Oguchi A."/>
            <person name="Aoki K."/>
            <person name="Nagai Y."/>
            <person name="Lian J.-Q."/>
            <person name="Ito T."/>
            <person name="Kanamori M."/>
            <person name="Matsumaru H."/>
            <person name="Maruyama A."/>
            <person name="Murakami H."/>
            <person name="Hosoyama A."/>
            <person name="Mizutani-Ui Y."/>
            <person name="Takahashi N.K."/>
            <person name="Sawano T."/>
            <person name="Inoue R."/>
            <person name="Kaito C."/>
            <person name="Sekimizu K."/>
            <person name="Hirakawa H."/>
            <person name="Kuhara S."/>
            <person name="Goto S."/>
            <person name="Yabuzaki J."/>
            <person name="Kanehisa M."/>
            <person name="Yamashita A."/>
            <person name="Oshima K."/>
            <person name="Furuya K."/>
            <person name="Yoshino C."/>
            <person name="Shiba T."/>
            <person name="Hattori M."/>
            <person name="Ogasawara N."/>
            <person name="Hayashi H."/>
            <person name="Hiramatsu K."/>
        </authorList>
    </citation>
    <scope>NUCLEOTIDE SEQUENCE [LARGE SCALE GENOMIC DNA]</scope>
    <source>
        <strain>N315</strain>
    </source>
</reference>
<reference key="2">
    <citation type="submission" date="2007-10" db="UniProtKB">
        <title>Shotgun proteomic analysis of total and membrane protein extracts of S. aureus strain N315.</title>
        <authorList>
            <person name="Vaezzadeh A.R."/>
            <person name="Deshusses J."/>
            <person name="Lescuyer P."/>
            <person name="Hochstrasser D.F."/>
        </authorList>
    </citation>
    <scope>IDENTIFICATION BY MASS SPECTROMETRY [LARGE SCALE ANALYSIS]</scope>
    <source>
        <strain>N315</strain>
    </source>
</reference>
<keyword id="KW-0963">Cytoplasm</keyword>
<keyword id="KW-0255">Endonuclease</keyword>
<keyword id="KW-0269">Exonuclease</keyword>
<keyword id="KW-0378">Hydrolase</keyword>
<keyword id="KW-0479">Metal-binding</keyword>
<keyword id="KW-0540">Nuclease</keyword>
<keyword id="KW-0694">RNA-binding</keyword>
<keyword id="KW-0698">rRNA processing</keyword>
<keyword id="KW-0862">Zinc</keyword>
<accession>Q7A682</accession>